<accession>P62008</accession>
<accession>G8ZJD3</accession>
<accession>O59165</accession>
<accession>Q9V0W4</accession>
<proteinExistence type="evidence at protein level"/>
<organism>
    <name type="scientific">Pyrococcus abyssi (strain GE5 / Orsay)</name>
    <dbReference type="NCBI Taxonomy" id="272844"/>
    <lineage>
        <taxon>Archaea</taxon>
        <taxon>Methanobacteriati</taxon>
        <taxon>Methanobacteriota</taxon>
        <taxon>Thermococci</taxon>
        <taxon>Thermococcales</taxon>
        <taxon>Thermococcaceae</taxon>
        <taxon>Pyrococcus</taxon>
    </lineage>
</organism>
<name>RL7A_PYRAB</name>
<dbReference type="EMBL" id="AJ248285">
    <property type="protein sequence ID" value="CAB49588.1"/>
    <property type="status" value="ALT_INIT"/>
    <property type="molecule type" value="Genomic_DNA"/>
</dbReference>
<dbReference type="EMBL" id="HE613800">
    <property type="protein sequence ID" value="CCE70060.1"/>
    <property type="status" value="ALT_INIT"/>
    <property type="molecule type" value="Genomic_DNA"/>
</dbReference>
<dbReference type="PIR" id="C75109">
    <property type="entry name" value="C75109"/>
</dbReference>
<dbReference type="RefSeq" id="WP_048053601.1">
    <property type="nucleotide sequence ID" value="NC_000868.1"/>
</dbReference>
<dbReference type="PDB" id="1PXW">
    <property type="method" value="X-ray"/>
    <property type="resolution" value="1.94 A"/>
    <property type="chains" value="A/B=1-123"/>
</dbReference>
<dbReference type="PDB" id="6SW9">
    <property type="method" value="EM"/>
    <property type="resolution" value="4.20 A"/>
    <property type="chains" value="3=1-123"/>
</dbReference>
<dbReference type="PDB" id="6SWC">
    <property type="method" value="EM"/>
    <property type="resolution" value="3.30 A"/>
    <property type="chains" value="3=1-123"/>
</dbReference>
<dbReference type="PDB" id="6SWE">
    <property type="method" value="EM"/>
    <property type="resolution" value="3.10 A"/>
    <property type="chains" value="3=1-123"/>
</dbReference>
<dbReference type="PDB" id="7ZAG">
    <property type="method" value="EM"/>
    <property type="resolution" value="2.77 A"/>
    <property type="chains" value="3=1-123"/>
</dbReference>
<dbReference type="PDB" id="7ZAH">
    <property type="method" value="EM"/>
    <property type="resolution" value="2.70 A"/>
    <property type="chains" value="3=1-123"/>
</dbReference>
<dbReference type="PDB" id="7ZAI">
    <property type="method" value="EM"/>
    <property type="resolution" value="2.60 A"/>
    <property type="chains" value="3=1-123"/>
</dbReference>
<dbReference type="PDB" id="7ZHG">
    <property type="method" value="EM"/>
    <property type="resolution" value="2.25 A"/>
    <property type="chains" value="3=1-123"/>
</dbReference>
<dbReference type="PDBsum" id="1PXW"/>
<dbReference type="PDBsum" id="6SW9"/>
<dbReference type="PDBsum" id="6SWC"/>
<dbReference type="PDBsum" id="6SWE"/>
<dbReference type="PDBsum" id="7ZAG"/>
<dbReference type="PDBsum" id="7ZAH"/>
<dbReference type="PDBsum" id="7ZAI"/>
<dbReference type="PDBsum" id="7ZHG"/>
<dbReference type="EMDB" id="EMD-10320"/>
<dbReference type="EMDB" id="EMD-10322"/>
<dbReference type="EMDB" id="EMD-10324"/>
<dbReference type="EMDB" id="EMD-14579"/>
<dbReference type="EMDB" id="EMD-14580"/>
<dbReference type="EMDB" id="EMD-14581"/>
<dbReference type="EMDB" id="EMD-14731"/>
<dbReference type="EMDB" id="EMD-8148"/>
<dbReference type="SMR" id="P62008"/>
<dbReference type="STRING" id="272844.PAB0460"/>
<dbReference type="GeneID" id="1443815"/>
<dbReference type="KEGG" id="pab:PAB0460"/>
<dbReference type="PATRIC" id="fig|272844.11.peg.705"/>
<dbReference type="eggNOG" id="arCOG01751">
    <property type="taxonomic scope" value="Archaea"/>
</dbReference>
<dbReference type="HOGENOM" id="CLU_084513_4_0_2"/>
<dbReference type="OrthoDB" id="25810at2157"/>
<dbReference type="PhylomeDB" id="P62008"/>
<dbReference type="EvolutionaryTrace" id="P62008"/>
<dbReference type="Proteomes" id="UP000000810">
    <property type="component" value="Chromosome"/>
</dbReference>
<dbReference type="Proteomes" id="UP000009139">
    <property type="component" value="Chromosome"/>
</dbReference>
<dbReference type="GO" id="GO:0005737">
    <property type="term" value="C:cytoplasm"/>
    <property type="evidence" value="ECO:0007669"/>
    <property type="project" value="UniProtKB-SubCell"/>
</dbReference>
<dbReference type="GO" id="GO:1990904">
    <property type="term" value="C:ribonucleoprotein complex"/>
    <property type="evidence" value="ECO:0007669"/>
    <property type="project" value="UniProtKB-KW"/>
</dbReference>
<dbReference type="GO" id="GO:0005840">
    <property type="term" value="C:ribosome"/>
    <property type="evidence" value="ECO:0007669"/>
    <property type="project" value="UniProtKB-KW"/>
</dbReference>
<dbReference type="GO" id="GO:0004526">
    <property type="term" value="F:ribonuclease P activity"/>
    <property type="evidence" value="ECO:0007669"/>
    <property type="project" value="UniProtKB-UniRule"/>
</dbReference>
<dbReference type="GO" id="GO:0019843">
    <property type="term" value="F:rRNA binding"/>
    <property type="evidence" value="ECO:0007669"/>
    <property type="project" value="UniProtKB-KW"/>
</dbReference>
<dbReference type="GO" id="GO:0003735">
    <property type="term" value="F:structural constituent of ribosome"/>
    <property type="evidence" value="ECO:0007669"/>
    <property type="project" value="InterPro"/>
</dbReference>
<dbReference type="GO" id="GO:0042254">
    <property type="term" value="P:ribosome biogenesis"/>
    <property type="evidence" value="ECO:0007669"/>
    <property type="project" value="InterPro"/>
</dbReference>
<dbReference type="GO" id="GO:0006412">
    <property type="term" value="P:translation"/>
    <property type="evidence" value="ECO:0007669"/>
    <property type="project" value="UniProtKB-UniRule"/>
</dbReference>
<dbReference type="GO" id="GO:0001682">
    <property type="term" value="P:tRNA 5'-leader removal"/>
    <property type="evidence" value="ECO:0007669"/>
    <property type="project" value="UniProtKB-UniRule"/>
</dbReference>
<dbReference type="FunFam" id="3.30.1330.30:FF:000020">
    <property type="entry name" value="50S ribosomal protein L7Ae"/>
    <property type="match status" value="1"/>
</dbReference>
<dbReference type="Gene3D" id="3.30.1330.30">
    <property type="match status" value="1"/>
</dbReference>
<dbReference type="HAMAP" id="MF_00326">
    <property type="entry name" value="Ribosomal_eL8"/>
    <property type="match status" value="1"/>
</dbReference>
<dbReference type="InterPro" id="IPR050257">
    <property type="entry name" value="eL8/uL1-like"/>
</dbReference>
<dbReference type="InterPro" id="IPR029064">
    <property type="entry name" value="Ribosomal_eL30-like_sf"/>
</dbReference>
<dbReference type="InterPro" id="IPR004037">
    <property type="entry name" value="Ribosomal_eL8-like_CS"/>
</dbReference>
<dbReference type="InterPro" id="IPR004038">
    <property type="entry name" value="Ribosomal_eL8/eL30/eS12/Gad45"/>
</dbReference>
<dbReference type="InterPro" id="IPR018492">
    <property type="entry name" value="Ribosomal_eL8/Nhp2"/>
</dbReference>
<dbReference type="InterPro" id="IPR022481">
    <property type="entry name" value="Ribosomal_eL8_arc"/>
</dbReference>
<dbReference type="NCBIfam" id="TIGR03677">
    <property type="entry name" value="eL8_ribo"/>
    <property type="match status" value="1"/>
</dbReference>
<dbReference type="PANTHER" id="PTHR23105">
    <property type="entry name" value="RIBOSOMAL PROTEIN L7AE FAMILY MEMBER"/>
    <property type="match status" value="1"/>
</dbReference>
<dbReference type="Pfam" id="PF01248">
    <property type="entry name" value="Ribosomal_L7Ae"/>
    <property type="match status" value="1"/>
</dbReference>
<dbReference type="PRINTS" id="PR00881">
    <property type="entry name" value="L7ARS6FAMILY"/>
</dbReference>
<dbReference type="PRINTS" id="PR00884">
    <property type="entry name" value="RIBOSOMALHS6"/>
</dbReference>
<dbReference type="SUPFAM" id="SSF55315">
    <property type="entry name" value="L30e-like"/>
    <property type="match status" value="1"/>
</dbReference>
<dbReference type="PROSITE" id="PS01082">
    <property type="entry name" value="RIBOSOMAL_L7AE"/>
    <property type="match status" value="1"/>
</dbReference>
<gene>
    <name evidence="1" type="primary">rpl7ae</name>
    <name type="ordered locus">PYRAB06750</name>
    <name type="ORF">PAB0460</name>
</gene>
<reference key="1">
    <citation type="journal article" date="2003" name="Mol. Microbiol.">
        <title>An integrated analysis of the genome of the hyperthermophilic archaeon Pyrococcus abyssi.</title>
        <authorList>
            <person name="Cohen G.N."/>
            <person name="Barbe V."/>
            <person name="Flament D."/>
            <person name="Galperin M."/>
            <person name="Heilig R."/>
            <person name="Lecompte O."/>
            <person name="Poch O."/>
            <person name="Prieur D."/>
            <person name="Querellou J."/>
            <person name="Ripp R."/>
            <person name="Thierry J.-C."/>
            <person name="Van der Oost J."/>
            <person name="Weissenbach J."/>
            <person name="Zivanovic Y."/>
            <person name="Forterre P."/>
        </authorList>
    </citation>
    <scope>NUCLEOTIDE SEQUENCE [LARGE SCALE GENOMIC DNA]</scope>
    <source>
        <strain>GE5 / Orsay</strain>
    </source>
</reference>
<reference key="2">
    <citation type="journal article" date="2012" name="Curr. Microbiol.">
        <title>Re-annotation of two hyperthermophilic archaea Pyrococcus abyssi GE5 and Pyrococcus furiosus DSM 3638.</title>
        <authorList>
            <person name="Gao J."/>
            <person name="Wang J."/>
        </authorList>
    </citation>
    <scope>GENOME REANNOTATION</scope>
    <source>
        <strain>GE5 / Orsay</strain>
    </source>
</reference>
<reference key="3">
    <citation type="journal article" date="2004" name="Acta Crystallogr. D">
        <title>Purification, crystallization and preliminary X-ray diffraction data of L7Ae sRNP core protein from Pyrococcus abyssii.</title>
        <authorList>
            <person name="Charron C."/>
            <person name="Manival X."/>
            <person name="Charpentier B."/>
            <person name="Branlant C."/>
            <person name="Aubry A."/>
        </authorList>
    </citation>
    <scope>CRYSTALLIZATION</scope>
</reference>
<reference key="4">
    <citation type="journal article" date="2004" name="J. Mol. Biol.">
        <title>The archaeal sRNA binding protein L7Ae has a 3D structure very similar to that of its eukaryal counterpart while having a broader RNA-binding specificity.</title>
        <authorList>
            <person name="Charron C."/>
            <person name="Manival X."/>
            <person name="Clery A."/>
            <person name="Senty-Segault V."/>
            <person name="Charpentier B."/>
            <person name="Marmier-Gourrier N."/>
            <person name="Branlant C."/>
            <person name="Aubry A."/>
        </authorList>
    </citation>
    <scope>X-RAY CRYSTALLOGRAPHY (1.94 ANGSTROMS)</scope>
    <scope>RNA-BINDING</scope>
</reference>
<comment type="function">
    <text>Multifunctional RNA-binding protein that recognizes the K-turn motif in ribosomal RNA, the RNA component of RNase P, box H/ACA, box C/D and box C'/D' sRNAs.</text>
</comment>
<comment type="subunit">
    <text evidence="1">Part of the 50S ribosomal subunit. Probably part of the RNase P complex.</text>
</comment>
<comment type="subcellular location">
    <subcellularLocation>
        <location evidence="1">Cytoplasm</location>
    </subcellularLocation>
</comment>
<comment type="similarity">
    <text evidence="1">Belongs to the eukaryotic ribosomal protein eL8 family.</text>
</comment>
<comment type="sequence caution" evidence="2">
    <conflict type="erroneous initiation">
        <sequence resource="EMBL-CDS" id="CAB49588"/>
    </conflict>
    <text>Extended N-terminus.</text>
</comment>
<comment type="sequence caution" evidence="2">
    <conflict type="erroneous initiation">
        <sequence resource="EMBL-CDS" id="CCE70060"/>
    </conflict>
    <text>Extended N-terminus.</text>
</comment>
<protein>
    <recommendedName>
        <fullName evidence="1">Large ribosomal subunit protein eL8</fullName>
    </recommendedName>
    <alternativeName>
        <fullName evidence="2">50S ribosomal protein L7Ae</fullName>
    </alternativeName>
    <alternativeName>
        <fullName evidence="1">Ribosomal protein L8e</fullName>
    </alternativeName>
</protein>
<evidence type="ECO:0000255" key="1">
    <source>
        <dbReference type="HAMAP-Rule" id="MF_00326"/>
    </source>
</evidence>
<evidence type="ECO:0000305" key="2"/>
<evidence type="ECO:0007829" key="3">
    <source>
        <dbReference type="PDB" id="1PXW"/>
    </source>
</evidence>
<evidence type="ECO:0007829" key="4">
    <source>
        <dbReference type="PDB" id="7ZHG"/>
    </source>
</evidence>
<feature type="chain" id="PRO_0000136800" description="Large ribosomal subunit protein eL8">
    <location>
        <begin position="1"/>
        <end position="123"/>
    </location>
</feature>
<feature type="strand" evidence="4">
    <location>
        <begin position="4"/>
        <end position="6"/>
    </location>
</feature>
<feature type="helix" evidence="3">
    <location>
        <begin position="13"/>
        <end position="29"/>
    </location>
</feature>
<feature type="strand" evidence="3">
    <location>
        <begin position="30"/>
        <end position="35"/>
    </location>
</feature>
<feature type="helix" evidence="3">
    <location>
        <begin position="36"/>
        <end position="44"/>
    </location>
</feature>
<feature type="strand" evidence="3">
    <location>
        <begin position="49"/>
        <end position="55"/>
    </location>
</feature>
<feature type="helix" evidence="3">
    <location>
        <begin position="60"/>
        <end position="62"/>
    </location>
</feature>
<feature type="turn" evidence="3">
    <location>
        <begin position="63"/>
        <end position="65"/>
    </location>
</feature>
<feature type="helix" evidence="3">
    <location>
        <begin position="66"/>
        <end position="72"/>
    </location>
</feature>
<feature type="strand" evidence="3">
    <location>
        <begin position="77"/>
        <end position="81"/>
    </location>
</feature>
<feature type="helix" evidence="3">
    <location>
        <begin position="83"/>
        <end position="89"/>
    </location>
</feature>
<feature type="strand" evidence="3">
    <location>
        <begin position="97"/>
        <end position="103"/>
    </location>
</feature>
<feature type="helix" evidence="3">
    <location>
        <begin position="105"/>
        <end position="107"/>
    </location>
</feature>
<feature type="helix" evidence="3">
    <location>
        <begin position="108"/>
        <end position="121"/>
    </location>
</feature>
<sequence length="123" mass="13423">MAKPSYVKFEVPKELAEKALQAVEIARDTGKIRKGTNETTKAVERGQAKLVIIAEDVDPEEIVAHLPPLCEEKEIPYIYVPSKKELGAAAGIEVAAASVAIIEPGKARDLVEEIAMKVRELMK</sequence>
<keyword id="KW-0002">3D-structure</keyword>
<keyword id="KW-0963">Cytoplasm</keyword>
<keyword id="KW-0687">Ribonucleoprotein</keyword>
<keyword id="KW-0689">Ribosomal protein</keyword>
<keyword id="KW-0694">RNA-binding</keyword>
<keyword id="KW-0699">rRNA-binding</keyword>
<keyword id="KW-0819">tRNA processing</keyword>